<reference key="1">
    <citation type="journal article" date="2003" name="Nucleic Acids Res.">
        <title>The complete genome sequence and analysis of Corynebacterium diphtheriae NCTC13129.</title>
        <authorList>
            <person name="Cerdeno-Tarraga A.-M."/>
            <person name="Efstratiou A."/>
            <person name="Dover L.G."/>
            <person name="Holden M.T.G."/>
            <person name="Pallen M.J."/>
            <person name="Bentley S.D."/>
            <person name="Besra G.S."/>
            <person name="Churcher C.M."/>
            <person name="James K.D."/>
            <person name="De Zoysa A."/>
            <person name="Chillingworth T."/>
            <person name="Cronin A."/>
            <person name="Dowd L."/>
            <person name="Feltwell T."/>
            <person name="Hamlin N."/>
            <person name="Holroyd S."/>
            <person name="Jagels K."/>
            <person name="Moule S."/>
            <person name="Quail M.A."/>
            <person name="Rabbinowitsch E."/>
            <person name="Rutherford K.M."/>
            <person name="Thomson N.R."/>
            <person name="Unwin L."/>
            <person name="Whitehead S."/>
            <person name="Barrell B.G."/>
            <person name="Parkhill J."/>
        </authorList>
    </citation>
    <scope>NUCLEOTIDE SEQUENCE [LARGE SCALE GENOMIC DNA]</scope>
    <source>
        <strain>ATCC 700971 / NCTC 13129 / Biotype gravis</strain>
    </source>
</reference>
<protein>
    <recommendedName>
        <fullName evidence="1">Large ribosomal subunit protein uL16</fullName>
    </recommendedName>
    <alternativeName>
        <fullName evidence="3">50S ribosomal protein L16</fullName>
    </alternativeName>
</protein>
<gene>
    <name evidence="1" type="primary">rplP</name>
    <name type="ordered locus">DIP0480</name>
</gene>
<accession>Q6NJC8</accession>
<organism>
    <name type="scientific">Corynebacterium diphtheriae (strain ATCC 700971 / NCTC 13129 / Biotype gravis)</name>
    <dbReference type="NCBI Taxonomy" id="257309"/>
    <lineage>
        <taxon>Bacteria</taxon>
        <taxon>Bacillati</taxon>
        <taxon>Actinomycetota</taxon>
        <taxon>Actinomycetes</taxon>
        <taxon>Mycobacteriales</taxon>
        <taxon>Corynebacteriaceae</taxon>
        <taxon>Corynebacterium</taxon>
    </lineage>
</organism>
<keyword id="KW-1185">Reference proteome</keyword>
<keyword id="KW-0687">Ribonucleoprotein</keyword>
<keyword id="KW-0689">Ribosomal protein</keyword>
<keyword id="KW-0694">RNA-binding</keyword>
<keyword id="KW-0699">rRNA-binding</keyword>
<keyword id="KW-0820">tRNA-binding</keyword>
<sequence>MLIPKRVKYRRQHRPHRSGVSKGGNRITFGDYGIQALEPAYITNRQIESARIAINRHVKRGGKVWINIFPDRPLTQKPLGVRMGSGKGPVEKWVANVKPGRILFEMSFPNEEVALEALRRAGQKLPCKVRIVKKEDQF</sequence>
<dbReference type="EMBL" id="BX248355">
    <property type="protein sequence ID" value="CAE48987.1"/>
    <property type="molecule type" value="Genomic_DNA"/>
</dbReference>
<dbReference type="RefSeq" id="WP_004566732.1">
    <property type="nucleotide sequence ID" value="NC_002935.2"/>
</dbReference>
<dbReference type="SMR" id="Q6NJC8"/>
<dbReference type="STRING" id="257309.DIP0480"/>
<dbReference type="GeneID" id="29423307"/>
<dbReference type="KEGG" id="cdi:DIP0480"/>
<dbReference type="HOGENOM" id="CLU_078858_2_1_11"/>
<dbReference type="Proteomes" id="UP000002198">
    <property type="component" value="Chromosome"/>
</dbReference>
<dbReference type="GO" id="GO:0022625">
    <property type="term" value="C:cytosolic large ribosomal subunit"/>
    <property type="evidence" value="ECO:0007669"/>
    <property type="project" value="TreeGrafter"/>
</dbReference>
<dbReference type="GO" id="GO:0019843">
    <property type="term" value="F:rRNA binding"/>
    <property type="evidence" value="ECO:0007669"/>
    <property type="project" value="UniProtKB-UniRule"/>
</dbReference>
<dbReference type="GO" id="GO:0003735">
    <property type="term" value="F:structural constituent of ribosome"/>
    <property type="evidence" value="ECO:0007669"/>
    <property type="project" value="InterPro"/>
</dbReference>
<dbReference type="GO" id="GO:0000049">
    <property type="term" value="F:tRNA binding"/>
    <property type="evidence" value="ECO:0007669"/>
    <property type="project" value="UniProtKB-KW"/>
</dbReference>
<dbReference type="GO" id="GO:0006412">
    <property type="term" value="P:translation"/>
    <property type="evidence" value="ECO:0007669"/>
    <property type="project" value="UniProtKB-UniRule"/>
</dbReference>
<dbReference type="CDD" id="cd01433">
    <property type="entry name" value="Ribosomal_L16_L10e"/>
    <property type="match status" value="1"/>
</dbReference>
<dbReference type="FunFam" id="3.90.1170.10:FF:000001">
    <property type="entry name" value="50S ribosomal protein L16"/>
    <property type="match status" value="1"/>
</dbReference>
<dbReference type="Gene3D" id="3.90.1170.10">
    <property type="entry name" value="Ribosomal protein L10e/L16"/>
    <property type="match status" value="1"/>
</dbReference>
<dbReference type="HAMAP" id="MF_01342">
    <property type="entry name" value="Ribosomal_uL16"/>
    <property type="match status" value="1"/>
</dbReference>
<dbReference type="InterPro" id="IPR047873">
    <property type="entry name" value="Ribosomal_uL16"/>
</dbReference>
<dbReference type="InterPro" id="IPR000114">
    <property type="entry name" value="Ribosomal_uL16_bact-type"/>
</dbReference>
<dbReference type="InterPro" id="IPR020798">
    <property type="entry name" value="Ribosomal_uL16_CS"/>
</dbReference>
<dbReference type="InterPro" id="IPR016180">
    <property type="entry name" value="Ribosomal_uL16_dom"/>
</dbReference>
<dbReference type="InterPro" id="IPR036920">
    <property type="entry name" value="Ribosomal_uL16_sf"/>
</dbReference>
<dbReference type="NCBIfam" id="TIGR01164">
    <property type="entry name" value="rplP_bact"/>
    <property type="match status" value="1"/>
</dbReference>
<dbReference type="PANTHER" id="PTHR12220">
    <property type="entry name" value="50S/60S RIBOSOMAL PROTEIN L16"/>
    <property type="match status" value="1"/>
</dbReference>
<dbReference type="PANTHER" id="PTHR12220:SF13">
    <property type="entry name" value="LARGE RIBOSOMAL SUBUNIT PROTEIN UL16M"/>
    <property type="match status" value="1"/>
</dbReference>
<dbReference type="Pfam" id="PF00252">
    <property type="entry name" value="Ribosomal_L16"/>
    <property type="match status" value="1"/>
</dbReference>
<dbReference type="PRINTS" id="PR00060">
    <property type="entry name" value="RIBOSOMALL16"/>
</dbReference>
<dbReference type="SUPFAM" id="SSF54686">
    <property type="entry name" value="Ribosomal protein L16p/L10e"/>
    <property type="match status" value="1"/>
</dbReference>
<dbReference type="PROSITE" id="PS00586">
    <property type="entry name" value="RIBOSOMAL_L16_1"/>
    <property type="match status" value="1"/>
</dbReference>
<dbReference type="PROSITE" id="PS00701">
    <property type="entry name" value="RIBOSOMAL_L16_2"/>
    <property type="match status" value="1"/>
</dbReference>
<comment type="function">
    <text evidence="1">Binds 23S rRNA and is also seen to make contacts with the A and possibly P site tRNAs.</text>
</comment>
<comment type="subunit">
    <text evidence="1">Part of the 50S ribosomal subunit.</text>
</comment>
<comment type="similarity">
    <text evidence="1">Belongs to the universal ribosomal protein uL16 family.</text>
</comment>
<name>RL16_CORDI</name>
<proteinExistence type="inferred from homology"/>
<feature type="chain" id="PRO_0000062085" description="Large ribosomal subunit protein uL16">
    <location>
        <begin position="1"/>
        <end position="138"/>
    </location>
</feature>
<feature type="region of interest" description="Disordered" evidence="2">
    <location>
        <begin position="1"/>
        <end position="24"/>
    </location>
</feature>
<feature type="compositionally biased region" description="Basic residues" evidence="2">
    <location>
        <begin position="1"/>
        <end position="19"/>
    </location>
</feature>
<evidence type="ECO:0000255" key="1">
    <source>
        <dbReference type="HAMAP-Rule" id="MF_01342"/>
    </source>
</evidence>
<evidence type="ECO:0000256" key="2">
    <source>
        <dbReference type="SAM" id="MobiDB-lite"/>
    </source>
</evidence>
<evidence type="ECO:0000305" key="3"/>